<evidence type="ECO:0000255" key="1">
    <source>
        <dbReference type="HAMAP-Rule" id="MF_00152"/>
    </source>
</evidence>
<accession>B7UFH5</accession>
<name>END4_ECO27</name>
<sequence>MKYIGAHVSAAGGLANAAIRAAEIDATAFALFTKNQRQWRAAPLTTQTIDEFKAACEKYHYTSAQILPHDSYLINLGHPVAEALEKSRDAFIDEMQRCEQLGLSLLNFHPGSHLMQISEEDCLARIAESINIALDKTQGVTAVIENTAGQGSNLGFKFEHLAAIIDGVEDKSRVGVCIDTCHAFAAGYDLRTPAECEKTFADFARIVGFKYLRGMHLNDAKSTFGSRVDRHHSLGEGNIGHDAFRWIMQDDRFDGIPLILETINPDIWAEEIAWLKAQQTEKAVA</sequence>
<dbReference type="EC" id="3.1.21.2" evidence="1"/>
<dbReference type="EMBL" id="FM180568">
    <property type="protein sequence ID" value="CAS09853.1"/>
    <property type="molecule type" value="Genomic_DNA"/>
</dbReference>
<dbReference type="RefSeq" id="WP_000873880.1">
    <property type="nucleotide sequence ID" value="NC_011601.1"/>
</dbReference>
<dbReference type="SMR" id="B7UFH5"/>
<dbReference type="GeneID" id="86947100"/>
<dbReference type="KEGG" id="ecg:E2348C_2305"/>
<dbReference type="HOGENOM" id="CLU_025885_0_4_6"/>
<dbReference type="Proteomes" id="UP000008205">
    <property type="component" value="Chromosome"/>
</dbReference>
<dbReference type="GO" id="GO:0008833">
    <property type="term" value="F:deoxyribonuclease IV (phage-T4-induced) activity"/>
    <property type="evidence" value="ECO:0007669"/>
    <property type="project" value="UniProtKB-UniRule"/>
</dbReference>
<dbReference type="GO" id="GO:0003677">
    <property type="term" value="F:DNA binding"/>
    <property type="evidence" value="ECO:0007669"/>
    <property type="project" value="InterPro"/>
</dbReference>
<dbReference type="GO" id="GO:0003906">
    <property type="term" value="F:DNA-(apurinic or apyrimidinic site) endonuclease activity"/>
    <property type="evidence" value="ECO:0007669"/>
    <property type="project" value="TreeGrafter"/>
</dbReference>
<dbReference type="GO" id="GO:0008081">
    <property type="term" value="F:phosphoric diester hydrolase activity"/>
    <property type="evidence" value="ECO:0007669"/>
    <property type="project" value="TreeGrafter"/>
</dbReference>
<dbReference type="GO" id="GO:0008270">
    <property type="term" value="F:zinc ion binding"/>
    <property type="evidence" value="ECO:0007669"/>
    <property type="project" value="UniProtKB-UniRule"/>
</dbReference>
<dbReference type="GO" id="GO:0006284">
    <property type="term" value="P:base-excision repair"/>
    <property type="evidence" value="ECO:0007669"/>
    <property type="project" value="TreeGrafter"/>
</dbReference>
<dbReference type="CDD" id="cd00019">
    <property type="entry name" value="AP2Ec"/>
    <property type="match status" value="1"/>
</dbReference>
<dbReference type="FunFam" id="3.20.20.150:FF:000001">
    <property type="entry name" value="Probable endonuclease 4"/>
    <property type="match status" value="1"/>
</dbReference>
<dbReference type="Gene3D" id="3.20.20.150">
    <property type="entry name" value="Divalent-metal-dependent TIM barrel enzymes"/>
    <property type="match status" value="1"/>
</dbReference>
<dbReference type="HAMAP" id="MF_00152">
    <property type="entry name" value="Nfo"/>
    <property type="match status" value="1"/>
</dbReference>
<dbReference type="InterPro" id="IPR001719">
    <property type="entry name" value="AP_endonuc_2"/>
</dbReference>
<dbReference type="InterPro" id="IPR018246">
    <property type="entry name" value="AP_endonuc_F2_Zn_BS"/>
</dbReference>
<dbReference type="InterPro" id="IPR036237">
    <property type="entry name" value="Xyl_isomerase-like_sf"/>
</dbReference>
<dbReference type="InterPro" id="IPR013022">
    <property type="entry name" value="Xyl_isomerase-like_TIM-brl"/>
</dbReference>
<dbReference type="NCBIfam" id="TIGR00587">
    <property type="entry name" value="nfo"/>
    <property type="match status" value="1"/>
</dbReference>
<dbReference type="NCBIfam" id="NF002199">
    <property type="entry name" value="PRK01060.1-4"/>
    <property type="match status" value="1"/>
</dbReference>
<dbReference type="PANTHER" id="PTHR21445:SF0">
    <property type="entry name" value="APURINIC-APYRIMIDINIC ENDONUCLEASE"/>
    <property type="match status" value="1"/>
</dbReference>
<dbReference type="PANTHER" id="PTHR21445">
    <property type="entry name" value="ENDONUCLEASE IV ENDODEOXYRIBONUCLEASE IV"/>
    <property type="match status" value="1"/>
</dbReference>
<dbReference type="Pfam" id="PF01261">
    <property type="entry name" value="AP_endonuc_2"/>
    <property type="match status" value="1"/>
</dbReference>
<dbReference type="SMART" id="SM00518">
    <property type="entry name" value="AP2Ec"/>
    <property type="match status" value="1"/>
</dbReference>
<dbReference type="SUPFAM" id="SSF51658">
    <property type="entry name" value="Xylose isomerase-like"/>
    <property type="match status" value="1"/>
</dbReference>
<dbReference type="PROSITE" id="PS00729">
    <property type="entry name" value="AP_NUCLEASE_F2_1"/>
    <property type="match status" value="1"/>
</dbReference>
<dbReference type="PROSITE" id="PS00730">
    <property type="entry name" value="AP_NUCLEASE_F2_2"/>
    <property type="match status" value="1"/>
</dbReference>
<dbReference type="PROSITE" id="PS00731">
    <property type="entry name" value="AP_NUCLEASE_F2_3"/>
    <property type="match status" value="1"/>
</dbReference>
<dbReference type="PROSITE" id="PS51432">
    <property type="entry name" value="AP_NUCLEASE_F2_4"/>
    <property type="match status" value="1"/>
</dbReference>
<comment type="function">
    <text evidence="1">Endonuclease IV plays a role in DNA repair. It cleaves phosphodiester bonds at apurinic or apyrimidinic (AP) sites, generating a 3'-hydroxyl group and a 5'-terminal sugar phosphate.</text>
</comment>
<comment type="catalytic activity">
    <reaction evidence="1">
        <text>Endonucleolytic cleavage to 5'-phosphooligonucleotide end-products.</text>
        <dbReference type="EC" id="3.1.21.2"/>
    </reaction>
</comment>
<comment type="cofactor">
    <cofactor evidence="1">
        <name>Zn(2+)</name>
        <dbReference type="ChEBI" id="CHEBI:29105"/>
    </cofactor>
    <text evidence="1">Binds 3 Zn(2+) ions.</text>
</comment>
<comment type="similarity">
    <text evidence="1">Belongs to the AP endonuclease 2 family.</text>
</comment>
<protein>
    <recommendedName>
        <fullName evidence="1">Probable endonuclease 4</fullName>
        <ecNumber evidence="1">3.1.21.2</ecNumber>
    </recommendedName>
    <alternativeName>
        <fullName evidence="1">Endodeoxyribonuclease IV</fullName>
    </alternativeName>
    <alternativeName>
        <fullName evidence="1">Endonuclease IV</fullName>
    </alternativeName>
</protein>
<keyword id="KW-0227">DNA damage</keyword>
<keyword id="KW-0234">DNA repair</keyword>
<keyword id="KW-0255">Endonuclease</keyword>
<keyword id="KW-0378">Hydrolase</keyword>
<keyword id="KW-0479">Metal-binding</keyword>
<keyword id="KW-0540">Nuclease</keyword>
<keyword id="KW-1185">Reference proteome</keyword>
<keyword id="KW-0862">Zinc</keyword>
<reference key="1">
    <citation type="journal article" date="2009" name="J. Bacteriol.">
        <title>Complete genome sequence and comparative genome analysis of enteropathogenic Escherichia coli O127:H6 strain E2348/69.</title>
        <authorList>
            <person name="Iguchi A."/>
            <person name="Thomson N.R."/>
            <person name="Ogura Y."/>
            <person name="Saunders D."/>
            <person name="Ooka T."/>
            <person name="Henderson I.R."/>
            <person name="Harris D."/>
            <person name="Asadulghani M."/>
            <person name="Kurokawa K."/>
            <person name="Dean P."/>
            <person name="Kenny B."/>
            <person name="Quail M.A."/>
            <person name="Thurston S."/>
            <person name="Dougan G."/>
            <person name="Hayashi T."/>
            <person name="Parkhill J."/>
            <person name="Frankel G."/>
        </authorList>
    </citation>
    <scope>NUCLEOTIDE SEQUENCE [LARGE SCALE GENOMIC DNA]</scope>
    <source>
        <strain>E2348/69 / EPEC</strain>
    </source>
</reference>
<organism>
    <name type="scientific">Escherichia coli O127:H6 (strain E2348/69 / EPEC)</name>
    <dbReference type="NCBI Taxonomy" id="574521"/>
    <lineage>
        <taxon>Bacteria</taxon>
        <taxon>Pseudomonadati</taxon>
        <taxon>Pseudomonadota</taxon>
        <taxon>Gammaproteobacteria</taxon>
        <taxon>Enterobacterales</taxon>
        <taxon>Enterobacteriaceae</taxon>
        <taxon>Escherichia</taxon>
    </lineage>
</organism>
<proteinExistence type="inferred from homology"/>
<gene>
    <name evidence="1" type="primary">nfo</name>
    <name type="ordered locus">E2348C_2305</name>
</gene>
<feature type="chain" id="PRO_1000123325" description="Probable endonuclease 4">
    <location>
        <begin position="1"/>
        <end position="285"/>
    </location>
</feature>
<feature type="binding site" evidence="1">
    <location>
        <position position="69"/>
    </location>
    <ligand>
        <name>Zn(2+)</name>
        <dbReference type="ChEBI" id="CHEBI:29105"/>
        <label>1</label>
    </ligand>
</feature>
<feature type="binding site" evidence="1">
    <location>
        <position position="109"/>
    </location>
    <ligand>
        <name>Zn(2+)</name>
        <dbReference type="ChEBI" id="CHEBI:29105"/>
        <label>1</label>
    </ligand>
</feature>
<feature type="binding site" evidence="1">
    <location>
        <position position="145"/>
    </location>
    <ligand>
        <name>Zn(2+)</name>
        <dbReference type="ChEBI" id="CHEBI:29105"/>
        <label>1</label>
    </ligand>
</feature>
<feature type="binding site" evidence="1">
    <location>
        <position position="145"/>
    </location>
    <ligand>
        <name>Zn(2+)</name>
        <dbReference type="ChEBI" id="CHEBI:29105"/>
        <label>2</label>
    </ligand>
</feature>
<feature type="binding site" evidence="1">
    <location>
        <position position="179"/>
    </location>
    <ligand>
        <name>Zn(2+)</name>
        <dbReference type="ChEBI" id="CHEBI:29105"/>
        <label>2</label>
    </ligand>
</feature>
<feature type="binding site" evidence="1">
    <location>
        <position position="182"/>
    </location>
    <ligand>
        <name>Zn(2+)</name>
        <dbReference type="ChEBI" id="CHEBI:29105"/>
        <label>3</label>
    </ligand>
</feature>
<feature type="binding site" evidence="1">
    <location>
        <position position="216"/>
    </location>
    <ligand>
        <name>Zn(2+)</name>
        <dbReference type="ChEBI" id="CHEBI:29105"/>
        <label>2</label>
    </ligand>
</feature>
<feature type="binding site" evidence="1">
    <location>
        <position position="229"/>
    </location>
    <ligand>
        <name>Zn(2+)</name>
        <dbReference type="ChEBI" id="CHEBI:29105"/>
        <label>3</label>
    </ligand>
</feature>
<feature type="binding site" evidence="1">
    <location>
        <position position="231"/>
    </location>
    <ligand>
        <name>Zn(2+)</name>
        <dbReference type="ChEBI" id="CHEBI:29105"/>
        <label>3</label>
    </ligand>
</feature>
<feature type="binding site" evidence="1">
    <location>
        <position position="261"/>
    </location>
    <ligand>
        <name>Zn(2+)</name>
        <dbReference type="ChEBI" id="CHEBI:29105"/>
        <label>2</label>
    </ligand>
</feature>